<evidence type="ECO:0000255" key="1">
    <source>
        <dbReference type="HAMAP-Rule" id="MF_01393"/>
    </source>
</evidence>
<dbReference type="EMBL" id="AM295007">
    <property type="protein sequence ID" value="CAM30556.1"/>
    <property type="molecule type" value="Genomic_DNA"/>
</dbReference>
<dbReference type="RefSeq" id="WP_011889024.1">
    <property type="nucleotide sequence ID" value="NC_009332.1"/>
</dbReference>
<dbReference type="SMR" id="A2RFC7"/>
<dbReference type="KEGG" id="spf:SpyM51232"/>
<dbReference type="HOGENOM" id="CLU_041018_2_3_9"/>
<dbReference type="GO" id="GO:0005886">
    <property type="term" value="C:plasma membrane"/>
    <property type="evidence" value="ECO:0007669"/>
    <property type="project" value="UniProtKB-SubCell"/>
</dbReference>
<dbReference type="GO" id="GO:0045259">
    <property type="term" value="C:proton-transporting ATP synthase complex"/>
    <property type="evidence" value="ECO:0007669"/>
    <property type="project" value="UniProtKB-KW"/>
</dbReference>
<dbReference type="GO" id="GO:0046933">
    <property type="term" value="F:proton-transporting ATP synthase activity, rotational mechanism"/>
    <property type="evidence" value="ECO:0007669"/>
    <property type="project" value="UniProtKB-UniRule"/>
</dbReference>
<dbReference type="GO" id="GO:0042777">
    <property type="term" value="P:proton motive force-driven plasma membrane ATP synthesis"/>
    <property type="evidence" value="ECO:0007669"/>
    <property type="project" value="TreeGrafter"/>
</dbReference>
<dbReference type="CDD" id="cd00310">
    <property type="entry name" value="ATP-synt_Fo_a_6"/>
    <property type="match status" value="1"/>
</dbReference>
<dbReference type="Gene3D" id="1.20.120.220">
    <property type="entry name" value="ATP synthase, F0 complex, subunit A"/>
    <property type="match status" value="1"/>
</dbReference>
<dbReference type="HAMAP" id="MF_01393">
    <property type="entry name" value="ATP_synth_a_bact"/>
    <property type="match status" value="1"/>
</dbReference>
<dbReference type="InterPro" id="IPR045082">
    <property type="entry name" value="ATP_syn_F0_a_bact/chloroplast"/>
</dbReference>
<dbReference type="InterPro" id="IPR000568">
    <property type="entry name" value="ATP_synth_F0_asu"/>
</dbReference>
<dbReference type="InterPro" id="IPR023011">
    <property type="entry name" value="ATP_synth_F0_asu_AS"/>
</dbReference>
<dbReference type="InterPro" id="IPR035908">
    <property type="entry name" value="F0_ATP_A_sf"/>
</dbReference>
<dbReference type="NCBIfam" id="TIGR01131">
    <property type="entry name" value="ATP_synt_6_or_A"/>
    <property type="match status" value="1"/>
</dbReference>
<dbReference type="NCBIfam" id="NF004479">
    <property type="entry name" value="PRK05815.1-4"/>
    <property type="match status" value="1"/>
</dbReference>
<dbReference type="PANTHER" id="PTHR42823">
    <property type="entry name" value="ATP SYNTHASE SUBUNIT A, CHLOROPLASTIC"/>
    <property type="match status" value="1"/>
</dbReference>
<dbReference type="PANTHER" id="PTHR42823:SF3">
    <property type="entry name" value="ATP SYNTHASE SUBUNIT A, CHLOROPLASTIC"/>
    <property type="match status" value="1"/>
</dbReference>
<dbReference type="Pfam" id="PF00119">
    <property type="entry name" value="ATP-synt_A"/>
    <property type="match status" value="1"/>
</dbReference>
<dbReference type="PRINTS" id="PR00123">
    <property type="entry name" value="ATPASEA"/>
</dbReference>
<dbReference type="SUPFAM" id="SSF81336">
    <property type="entry name" value="F1F0 ATP synthase subunit A"/>
    <property type="match status" value="1"/>
</dbReference>
<dbReference type="PROSITE" id="PS00449">
    <property type="entry name" value="ATPASE_A"/>
    <property type="match status" value="1"/>
</dbReference>
<protein>
    <recommendedName>
        <fullName evidence="1">ATP synthase subunit a</fullName>
    </recommendedName>
    <alternativeName>
        <fullName evidence="1">ATP synthase F0 sector subunit a</fullName>
    </alternativeName>
    <alternativeName>
        <fullName evidence="1">F-ATPase subunit 6</fullName>
    </alternativeName>
</protein>
<reference key="1">
    <citation type="journal article" date="2007" name="J. Bacteriol.">
        <title>Complete genome of acute rheumatic fever-associated serotype M5 Streptococcus pyogenes strain Manfredo.</title>
        <authorList>
            <person name="Holden M.T.G."/>
            <person name="Scott A."/>
            <person name="Cherevach I."/>
            <person name="Chillingworth T."/>
            <person name="Churcher C."/>
            <person name="Cronin A."/>
            <person name="Dowd L."/>
            <person name="Feltwell T."/>
            <person name="Hamlin N."/>
            <person name="Holroyd S."/>
            <person name="Jagels K."/>
            <person name="Moule S."/>
            <person name="Mungall K."/>
            <person name="Quail M.A."/>
            <person name="Price C."/>
            <person name="Rabbinowitsch E."/>
            <person name="Sharp S."/>
            <person name="Skelton J."/>
            <person name="Whitehead S."/>
            <person name="Barrell B.G."/>
            <person name="Kehoe M."/>
            <person name="Parkhill J."/>
        </authorList>
    </citation>
    <scope>NUCLEOTIDE SEQUENCE [LARGE SCALE GENOMIC DNA]</scope>
    <source>
        <strain>Manfredo</strain>
    </source>
</reference>
<name>ATP6_STRPG</name>
<sequence length="238" mass="26925">MEEAKIPMLELGPITFNLTLLAVCIVTIAVIFAFVFWASRQMKLKPEGKQTALEYLISFVDGIGEEHLDHNLQKSYSLLLFTIFLFVAVANNLGLFTKLETVNGYNLWTSPTANLAFDLALSLFITLMVHIEGVRRRGLVAHLKRLATPWPMTPMNLLEEFTNFLSLAIRLFGNIFAGEVVTGLIVQLANYRVYWWPIAFLVNMAWTAFSVFISCIQAFVFTKLTATYLGKKVNESEE</sequence>
<keyword id="KW-0066">ATP synthesis</keyword>
<keyword id="KW-1003">Cell membrane</keyword>
<keyword id="KW-0138">CF(0)</keyword>
<keyword id="KW-0375">Hydrogen ion transport</keyword>
<keyword id="KW-0406">Ion transport</keyword>
<keyword id="KW-0472">Membrane</keyword>
<keyword id="KW-0812">Transmembrane</keyword>
<keyword id="KW-1133">Transmembrane helix</keyword>
<keyword id="KW-0813">Transport</keyword>
<feature type="chain" id="PRO_1000145334" description="ATP synthase subunit a">
    <location>
        <begin position="1"/>
        <end position="238"/>
    </location>
</feature>
<feature type="transmembrane region" description="Helical" evidence="1">
    <location>
        <begin position="18"/>
        <end position="38"/>
    </location>
</feature>
<feature type="transmembrane region" description="Helical" evidence="1">
    <location>
        <begin position="76"/>
        <end position="96"/>
    </location>
</feature>
<feature type="transmembrane region" description="Helical" evidence="1">
    <location>
        <begin position="114"/>
        <end position="134"/>
    </location>
</feature>
<feature type="transmembrane region" description="Helical" evidence="1">
    <location>
        <begin position="166"/>
        <end position="186"/>
    </location>
</feature>
<feature type="transmembrane region" description="Helical" evidence="1">
    <location>
        <begin position="193"/>
        <end position="213"/>
    </location>
</feature>
<proteinExistence type="inferred from homology"/>
<organism>
    <name type="scientific">Streptococcus pyogenes serotype M5 (strain Manfredo)</name>
    <dbReference type="NCBI Taxonomy" id="160491"/>
    <lineage>
        <taxon>Bacteria</taxon>
        <taxon>Bacillati</taxon>
        <taxon>Bacillota</taxon>
        <taxon>Bacilli</taxon>
        <taxon>Lactobacillales</taxon>
        <taxon>Streptococcaceae</taxon>
        <taxon>Streptococcus</taxon>
    </lineage>
</organism>
<accession>A2RFC7</accession>
<gene>
    <name evidence="1" type="primary">atpB</name>
    <name type="ordered locus">SpyM51232</name>
</gene>
<comment type="function">
    <text evidence="1">Key component of the proton channel; it plays a direct role in the translocation of protons across the membrane.</text>
</comment>
<comment type="subunit">
    <text evidence="1">F-type ATPases have 2 components, CF(1) - the catalytic core - and CF(0) - the membrane proton channel. CF(1) has five subunits: alpha(3), beta(3), gamma(1), delta(1), epsilon(1). CF(0) has three main subunits: a(1), b(2) and c(9-12). The alpha and beta chains form an alternating ring which encloses part of the gamma chain. CF(1) is attached to CF(0) by a central stalk formed by the gamma and epsilon chains, while a peripheral stalk is formed by the delta and b chains.</text>
</comment>
<comment type="subcellular location">
    <subcellularLocation>
        <location evidence="1">Cell membrane</location>
        <topology evidence="1">Multi-pass membrane protein</topology>
    </subcellularLocation>
</comment>
<comment type="similarity">
    <text evidence="1">Belongs to the ATPase A chain family.</text>
</comment>